<reference key="1">
    <citation type="submission" date="2006-03" db="EMBL/GenBank/DDBJ databases">
        <title>Complete genome sequence of Francisella tularensis LVS (Live Vaccine Strain).</title>
        <authorList>
            <person name="Chain P."/>
            <person name="Larimer F."/>
            <person name="Land M."/>
            <person name="Stilwagen S."/>
            <person name="Larsson P."/>
            <person name="Bearden S."/>
            <person name="Chu M."/>
            <person name="Oyston P."/>
            <person name="Forsman M."/>
            <person name="Andersson S."/>
            <person name="Lindler L."/>
            <person name="Titball R."/>
            <person name="Garcia E."/>
        </authorList>
    </citation>
    <scope>NUCLEOTIDE SEQUENCE [LARGE SCALE GENOMIC DNA]</scope>
    <source>
        <strain>LVS</strain>
    </source>
</reference>
<comment type="function">
    <text evidence="1">Phosphorylation of dTMP to form dTDP in both de novo and salvage pathways of dTTP synthesis.</text>
</comment>
<comment type="catalytic activity">
    <reaction evidence="1">
        <text>dTMP + ATP = dTDP + ADP</text>
        <dbReference type="Rhea" id="RHEA:13517"/>
        <dbReference type="ChEBI" id="CHEBI:30616"/>
        <dbReference type="ChEBI" id="CHEBI:58369"/>
        <dbReference type="ChEBI" id="CHEBI:63528"/>
        <dbReference type="ChEBI" id="CHEBI:456216"/>
        <dbReference type="EC" id="2.7.4.9"/>
    </reaction>
</comment>
<comment type="similarity">
    <text evidence="1">Belongs to the thymidylate kinase family.</text>
</comment>
<accession>Q2A1V7</accession>
<proteinExistence type="inferred from homology"/>
<name>KTHY_FRATH</name>
<keyword id="KW-0067">ATP-binding</keyword>
<keyword id="KW-0418">Kinase</keyword>
<keyword id="KW-0545">Nucleotide biosynthesis</keyword>
<keyword id="KW-0547">Nucleotide-binding</keyword>
<keyword id="KW-1185">Reference proteome</keyword>
<keyword id="KW-0808">Transferase</keyword>
<sequence length="209" mass="23752">MQSKFIVIEGLDGAGKSTAISFVRKYLEKNNLAAIYTREPGGTKIAEELRNLVLHNKYDEEIHSDSELLMIYAGRVQHYRNLIAPALEKGINVVSDRFYWSSMAYQGGGRGVELSKIRALNDNFLNGCEPDLVIYLDIDPILGLQRAQKVGSPDRIEKAGLEFFNRTRKVFKDLVKDLDNAIEIDAAKSIQEVEKQIYLILDKHFNFQN</sequence>
<dbReference type="EC" id="2.7.4.9" evidence="1"/>
<dbReference type="EMBL" id="AM233362">
    <property type="protein sequence ID" value="CAJ80099.1"/>
    <property type="molecule type" value="Genomic_DNA"/>
</dbReference>
<dbReference type="RefSeq" id="WP_003017083.1">
    <property type="nucleotide sequence ID" value="NZ_CP009694.1"/>
</dbReference>
<dbReference type="SMR" id="Q2A1V7"/>
<dbReference type="KEGG" id="ftl:FTL_1660"/>
<dbReference type="Proteomes" id="UP000001944">
    <property type="component" value="Chromosome"/>
</dbReference>
<dbReference type="GO" id="GO:0005829">
    <property type="term" value="C:cytosol"/>
    <property type="evidence" value="ECO:0007669"/>
    <property type="project" value="TreeGrafter"/>
</dbReference>
<dbReference type="GO" id="GO:0005524">
    <property type="term" value="F:ATP binding"/>
    <property type="evidence" value="ECO:0007669"/>
    <property type="project" value="UniProtKB-UniRule"/>
</dbReference>
<dbReference type="GO" id="GO:0004798">
    <property type="term" value="F:dTMP kinase activity"/>
    <property type="evidence" value="ECO:0007669"/>
    <property type="project" value="UniProtKB-UniRule"/>
</dbReference>
<dbReference type="GO" id="GO:0006233">
    <property type="term" value="P:dTDP biosynthetic process"/>
    <property type="evidence" value="ECO:0007669"/>
    <property type="project" value="InterPro"/>
</dbReference>
<dbReference type="GO" id="GO:0006235">
    <property type="term" value="P:dTTP biosynthetic process"/>
    <property type="evidence" value="ECO:0007669"/>
    <property type="project" value="UniProtKB-UniRule"/>
</dbReference>
<dbReference type="GO" id="GO:0006227">
    <property type="term" value="P:dUDP biosynthetic process"/>
    <property type="evidence" value="ECO:0007669"/>
    <property type="project" value="TreeGrafter"/>
</dbReference>
<dbReference type="CDD" id="cd01672">
    <property type="entry name" value="TMPK"/>
    <property type="match status" value="1"/>
</dbReference>
<dbReference type="FunFam" id="3.40.50.300:FF:000225">
    <property type="entry name" value="Thymidylate kinase"/>
    <property type="match status" value="1"/>
</dbReference>
<dbReference type="Gene3D" id="3.40.50.300">
    <property type="entry name" value="P-loop containing nucleotide triphosphate hydrolases"/>
    <property type="match status" value="1"/>
</dbReference>
<dbReference type="HAMAP" id="MF_00165">
    <property type="entry name" value="Thymidylate_kinase"/>
    <property type="match status" value="1"/>
</dbReference>
<dbReference type="InterPro" id="IPR027417">
    <property type="entry name" value="P-loop_NTPase"/>
</dbReference>
<dbReference type="InterPro" id="IPR039430">
    <property type="entry name" value="Thymidylate_kin-like_dom"/>
</dbReference>
<dbReference type="InterPro" id="IPR018095">
    <property type="entry name" value="Thymidylate_kin_CS"/>
</dbReference>
<dbReference type="InterPro" id="IPR018094">
    <property type="entry name" value="Thymidylate_kinase"/>
</dbReference>
<dbReference type="NCBIfam" id="TIGR00041">
    <property type="entry name" value="DTMP_kinase"/>
    <property type="match status" value="1"/>
</dbReference>
<dbReference type="PANTHER" id="PTHR10344">
    <property type="entry name" value="THYMIDYLATE KINASE"/>
    <property type="match status" value="1"/>
</dbReference>
<dbReference type="PANTHER" id="PTHR10344:SF4">
    <property type="entry name" value="UMP-CMP KINASE 2, MITOCHONDRIAL"/>
    <property type="match status" value="1"/>
</dbReference>
<dbReference type="Pfam" id="PF02223">
    <property type="entry name" value="Thymidylate_kin"/>
    <property type="match status" value="1"/>
</dbReference>
<dbReference type="SUPFAM" id="SSF52540">
    <property type="entry name" value="P-loop containing nucleoside triphosphate hydrolases"/>
    <property type="match status" value="1"/>
</dbReference>
<dbReference type="PROSITE" id="PS01331">
    <property type="entry name" value="THYMIDYLATE_KINASE"/>
    <property type="match status" value="1"/>
</dbReference>
<gene>
    <name evidence="1" type="primary">tmk</name>
    <name type="ordered locus">FTL_1660</name>
</gene>
<organism>
    <name type="scientific">Francisella tularensis subsp. holarctica (strain LVS)</name>
    <dbReference type="NCBI Taxonomy" id="376619"/>
    <lineage>
        <taxon>Bacteria</taxon>
        <taxon>Pseudomonadati</taxon>
        <taxon>Pseudomonadota</taxon>
        <taxon>Gammaproteobacteria</taxon>
        <taxon>Thiotrichales</taxon>
        <taxon>Francisellaceae</taxon>
        <taxon>Francisella</taxon>
    </lineage>
</organism>
<evidence type="ECO:0000255" key="1">
    <source>
        <dbReference type="HAMAP-Rule" id="MF_00165"/>
    </source>
</evidence>
<protein>
    <recommendedName>
        <fullName evidence="1">Thymidylate kinase</fullName>
        <ecNumber evidence="1">2.7.4.9</ecNumber>
    </recommendedName>
    <alternativeName>
        <fullName evidence="1">dTMP kinase</fullName>
    </alternativeName>
</protein>
<feature type="chain" id="PRO_1000023194" description="Thymidylate kinase">
    <location>
        <begin position="1"/>
        <end position="209"/>
    </location>
</feature>
<feature type="binding site" evidence="1">
    <location>
        <begin position="10"/>
        <end position="17"/>
    </location>
    <ligand>
        <name>ATP</name>
        <dbReference type="ChEBI" id="CHEBI:30616"/>
    </ligand>
</feature>